<sequence>MKADIHPQYHETTVTCTCGSTFTTRSTKENGAISAEVCSQCHPFYTGKQKILDVGGRVEKFERRFGRRQPGQKVGGAK</sequence>
<organism>
    <name type="scientific">Parafrankia sp. (strain EAN1pec)</name>
    <dbReference type="NCBI Taxonomy" id="298653"/>
    <lineage>
        <taxon>Bacteria</taxon>
        <taxon>Bacillati</taxon>
        <taxon>Actinomycetota</taxon>
        <taxon>Actinomycetes</taxon>
        <taxon>Frankiales</taxon>
        <taxon>Frankiaceae</taxon>
        <taxon>Parafrankia</taxon>
    </lineage>
</organism>
<keyword id="KW-0479">Metal-binding</keyword>
<keyword id="KW-0687">Ribonucleoprotein</keyword>
<keyword id="KW-0689">Ribosomal protein</keyword>
<keyword id="KW-0694">RNA-binding</keyword>
<keyword id="KW-0699">rRNA-binding</keyword>
<keyword id="KW-0862">Zinc</keyword>
<name>RL31_PARS2</name>
<proteinExistence type="inferred from homology"/>
<comment type="function">
    <text evidence="1">Binds the 23S rRNA.</text>
</comment>
<comment type="cofactor">
    <cofactor evidence="1">
        <name>Zn(2+)</name>
        <dbReference type="ChEBI" id="CHEBI:29105"/>
    </cofactor>
    <text evidence="1">Binds 1 zinc ion per subunit.</text>
</comment>
<comment type="subunit">
    <text evidence="1">Part of the 50S ribosomal subunit.</text>
</comment>
<comment type="similarity">
    <text evidence="1">Belongs to the bacterial ribosomal protein bL31 family. Type A subfamily.</text>
</comment>
<gene>
    <name evidence="1" type="primary">rpmE</name>
    <name type="ordered locus">Franean1_1009</name>
</gene>
<accession>A8L3V0</accession>
<feature type="chain" id="PRO_1000126630" description="Large ribosomal subunit protein bL31">
    <location>
        <begin position="1"/>
        <end position="78"/>
    </location>
</feature>
<feature type="binding site" evidence="1">
    <location>
        <position position="16"/>
    </location>
    <ligand>
        <name>Zn(2+)</name>
        <dbReference type="ChEBI" id="CHEBI:29105"/>
    </ligand>
</feature>
<feature type="binding site" evidence="1">
    <location>
        <position position="18"/>
    </location>
    <ligand>
        <name>Zn(2+)</name>
        <dbReference type="ChEBI" id="CHEBI:29105"/>
    </ligand>
</feature>
<feature type="binding site" evidence="1">
    <location>
        <position position="38"/>
    </location>
    <ligand>
        <name>Zn(2+)</name>
        <dbReference type="ChEBI" id="CHEBI:29105"/>
    </ligand>
</feature>
<feature type="binding site" evidence="1">
    <location>
        <position position="41"/>
    </location>
    <ligand>
        <name>Zn(2+)</name>
        <dbReference type="ChEBI" id="CHEBI:29105"/>
    </ligand>
</feature>
<reference key="1">
    <citation type="journal article" date="2007" name="Genome Res.">
        <title>Genome characteristics of facultatively symbiotic Frankia sp. strains reflect host range and host plant biogeography.</title>
        <authorList>
            <person name="Normand P."/>
            <person name="Lapierre P."/>
            <person name="Tisa L.S."/>
            <person name="Gogarten J.P."/>
            <person name="Alloisio N."/>
            <person name="Bagnarol E."/>
            <person name="Bassi C.A."/>
            <person name="Berry A.M."/>
            <person name="Bickhart D.M."/>
            <person name="Choisne N."/>
            <person name="Couloux A."/>
            <person name="Cournoyer B."/>
            <person name="Cruveiller S."/>
            <person name="Daubin V."/>
            <person name="Demange N."/>
            <person name="Francino M.P."/>
            <person name="Goltsman E."/>
            <person name="Huang Y."/>
            <person name="Kopp O.R."/>
            <person name="Labarre L."/>
            <person name="Lapidus A."/>
            <person name="Lavire C."/>
            <person name="Marechal J."/>
            <person name="Martinez M."/>
            <person name="Mastronunzio J.E."/>
            <person name="Mullin B.C."/>
            <person name="Niemann J."/>
            <person name="Pujic P."/>
            <person name="Rawnsley T."/>
            <person name="Rouy Z."/>
            <person name="Schenowitz C."/>
            <person name="Sellstedt A."/>
            <person name="Tavares F."/>
            <person name="Tomkins J.P."/>
            <person name="Vallenet D."/>
            <person name="Valverde C."/>
            <person name="Wall L.G."/>
            <person name="Wang Y."/>
            <person name="Medigue C."/>
            <person name="Benson D.R."/>
        </authorList>
    </citation>
    <scope>NUCLEOTIDE SEQUENCE [LARGE SCALE GENOMIC DNA]</scope>
    <source>
        <strain>EAN1pec</strain>
    </source>
</reference>
<protein>
    <recommendedName>
        <fullName evidence="1">Large ribosomal subunit protein bL31</fullName>
    </recommendedName>
    <alternativeName>
        <fullName evidence="2">50S ribosomal protein L31</fullName>
    </alternativeName>
</protein>
<evidence type="ECO:0000255" key="1">
    <source>
        <dbReference type="HAMAP-Rule" id="MF_00501"/>
    </source>
</evidence>
<evidence type="ECO:0000305" key="2"/>
<dbReference type="EMBL" id="CP000820">
    <property type="protein sequence ID" value="ABW10465.1"/>
    <property type="molecule type" value="Genomic_DNA"/>
</dbReference>
<dbReference type="RefSeq" id="WP_018502318.1">
    <property type="nucleotide sequence ID" value="NC_009921.1"/>
</dbReference>
<dbReference type="SMR" id="A8L3V0"/>
<dbReference type="STRING" id="298653.Franean1_1009"/>
<dbReference type="KEGG" id="fre:Franean1_1009"/>
<dbReference type="eggNOG" id="COG0254">
    <property type="taxonomic scope" value="Bacteria"/>
</dbReference>
<dbReference type="HOGENOM" id="CLU_114306_4_3_11"/>
<dbReference type="GO" id="GO:1990904">
    <property type="term" value="C:ribonucleoprotein complex"/>
    <property type="evidence" value="ECO:0007669"/>
    <property type="project" value="UniProtKB-KW"/>
</dbReference>
<dbReference type="GO" id="GO:0005840">
    <property type="term" value="C:ribosome"/>
    <property type="evidence" value="ECO:0007669"/>
    <property type="project" value="UniProtKB-KW"/>
</dbReference>
<dbReference type="GO" id="GO:0046872">
    <property type="term" value="F:metal ion binding"/>
    <property type="evidence" value="ECO:0007669"/>
    <property type="project" value="UniProtKB-KW"/>
</dbReference>
<dbReference type="GO" id="GO:0019843">
    <property type="term" value="F:rRNA binding"/>
    <property type="evidence" value="ECO:0007669"/>
    <property type="project" value="UniProtKB-KW"/>
</dbReference>
<dbReference type="GO" id="GO:0003735">
    <property type="term" value="F:structural constituent of ribosome"/>
    <property type="evidence" value="ECO:0007669"/>
    <property type="project" value="InterPro"/>
</dbReference>
<dbReference type="GO" id="GO:0006412">
    <property type="term" value="P:translation"/>
    <property type="evidence" value="ECO:0007669"/>
    <property type="project" value="UniProtKB-UniRule"/>
</dbReference>
<dbReference type="Gene3D" id="4.10.830.30">
    <property type="entry name" value="Ribosomal protein L31"/>
    <property type="match status" value="1"/>
</dbReference>
<dbReference type="HAMAP" id="MF_00501">
    <property type="entry name" value="Ribosomal_bL31_1"/>
    <property type="match status" value="1"/>
</dbReference>
<dbReference type="InterPro" id="IPR034704">
    <property type="entry name" value="Ribosomal_bL28/bL31-like_sf"/>
</dbReference>
<dbReference type="InterPro" id="IPR002150">
    <property type="entry name" value="Ribosomal_bL31"/>
</dbReference>
<dbReference type="InterPro" id="IPR027491">
    <property type="entry name" value="Ribosomal_bL31_A"/>
</dbReference>
<dbReference type="InterPro" id="IPR042105">
    <property type="entry name" value="Ribosomal_bL31_sf"/>
</dbReference>
<dbReference type="NCBIfam" id="TIGR00105">
    <property type="entry name" value="L31"/>
    <property type="match status" value="1"/>
</dbReference>
<dbReference type="NCBIfam" id="NF000612">
    <property type="entry name" value="PRK00019.1"/>
    <property type="match status" value="1"/>
</dbReference>
<dbReference type="NCBIfam" id="NF001809">
    <property type="entry name" value="PRK00528.1"/>
    <property type="match status" value="1"/>
</dbReference>
<dbReference type="PANTHER" id="PTHR33280">
    <property type="entry name" value="50S RIBOSOMAL PROTEIN L31, CHLOROPLASTIC"/>
    <property type="match status" value="1"/>
</dbReference>
<dbReference type="PANTHER" id="PTHR33280:SF1">
    <property type="entry name" value="LARGE RIBOSOMAL SUBUNIT PROTEIN BL31C"/>
    <property type="match status" value="1"/>
</dbReference>
<dbReference type="Pfam" id="PF01197">
    <property type="entry name" value="Ribosomal_L31"/>
    <property type="match status" value="1"/>
</dbReference>
<dbReference type="PRINTS" id="PR01249">
    <property type="entry name" value="RIBOSOMALL31"/>
</dbReference>
<dbReference type="SUPFAM" id="SSF143800">
    <property type="entry name" value="L28p-like"/>
    <property type="match status" value="1"/>
</dbReference>
<dbReference type="PROSITE" id="PS01143">
    <property type="entry name" value="RIBOSOMAL_L31"/>
    <property type="match status" value="1"/>
</dbReference>